<evidence type="ECO:0000255" key="1">
    <source>
        <dbReference type="HAMAP-Rule" id="MF_00057"/>
    </source>
</evidence>
<sequence length="252" mass="27722">MSFTVVIPARYQSTRLPGKPLADIGGKPMIQWVYEQAMQAGADRVIIATDDERVEQAVQAFGGVVCMTSPNHQSGTERLAEVVAKMAIPADHIVVNVQGDEPLIPPAIIRQVADNLAACSAPMATLAVEIEDEAEVFNPNAVKVITDKSGYALYFSRATIPWDRDNFAKADKAIVQPLLRHIGIYAYRAGFINTYLDWQPSQLEKIECLEQLRVLWHGEKIHVAVALEAPPAGVDTPEDLEVVRRIVAERAQ</sequence>
<dbReference type="EC" id="2.7.7.38" evidence="1"/>
<dbReference type="EMBL" id="CP001233">
    <property type="protein sequence ID" value="ACP06105.1"/>
    <property type="molecule type" value="Genomic_DNA"/>
</dbReference>
<dbReference type="RefSeq" id="WP_000011329.1">
    <property type="nucleotide sequence ID" value="NC_012578.1"/>
</dbReference>
<dbReference type="SMR" id="C3LNH9"/>
<dbReference type="KEGG" id="vcm:VCM66_1799"/>
<dbReference type="HOGENOM" id="CLU_065038_1_0_6"/>
<dbReference type="UniPathway" id="UPA00030"/>
<dbReference type="UniPathway" id="UPA00358">
    <property type="reaction ID" value="UER00476"/>
</dbReference>
<dbReference type="Proteomes" id="UP000001217">
    <property type="component" value="Chromosome I"/>
</dbReference>
<dbReference type="GO" id="GO:0005829">
    <property type="term" value="C:cytosol"/>
    <property type="evidence" value="ECO:0007669"/>
    <property type="project" value="TreeGrafter"/>
</dbReference>
<dbReference type="GO" id="GO:0008690">
    <property type="term" value="F:3-deoxy-manno-octulosonate cytidylyltransferase activity"/>
    <property type="evidence" value="ECO:0007669"/>
    <property type="project" value="UniProtKB-UniRule"/>
</dbReference>
<dbReference type="GO" id="GO:0033468">
    <property type="term" value="P:CMP-keto-3-deoxy-D-manno-octulosonic acid biosynthetic process"/>
    <property type="evidence" value="ECO:0007669"/>
    <property type="project" value="UniProtKB-UniRule"/>
</dbReference>
<dbReference type="GO" id="GO:0009103">
    <property type="term" value="P:lipopolysaccharide biosynthetic process"/>
    <property type="evidence" value="ECO:0007669"/>
    <property type="project" value="UniProtKB-UniRule"/>
</dbReference>
<dbReference type="CDD" id="cd02517">
    <property type="entry name" value="CMP-KDO-Synthetase"/>
    <property type="match status" value="1"/>
</dbReference>
<dbReference type="FunFam" id="3.90.550.10:FF:000011">
    <property type="entry name" value="3-deoxy-manno-octulosonate cytidylyltransferase"/>
    <property type="match status" value="1"/>
</dbReference>
<dbReference type="Gene3D" id="3.90.550.10">
    <property type="entry name" value="Spore Coat Polysaccharide Biosynthesis Protein SpsA, Chain A"/>
    <property type="match status" value="1"/>
</dbReference>
<dbReference type="HAMAP" id="MF_00057">
    <property type="entry name" value="KdsB"/>
    <property type="match status" value="1"/>
</dbReference>
<dbReference type="InterPro" id="IPR003329">
    <property type="entry name" value="Cytidylyl_trans"/>
</dbReference>
<dbReference type="InterPro" id="IPR004528">
    <property type="entry name" value="KdsB"/>
</dbReference>
<dbReference type="InterPro" id="IPR029044">
    <property type="entry name" value="Nucleotide-diphossugar_trans"/>
</dbReference>
<dbReference type="NCBIfam" id="TIGR00466">
    <property type="entry name" value="kdsB"/>
    <property type="match status" value="1"/>
</dbReference>
<dbReference type="NCBIfam" id="NF003950">
    <property type="entry name" value="PRK05450.1-3"/>
    <property type="match status" value="1"/>
</dbReference>
<dbReference type="NCBIfam" id="NF003952">
    <property type="entry name" value="PRK05450.1-5"/>
    <property type="match status" value="1"/>
</dbReference>
<dbReference type="NCBIfam" id="NF009905">
    <property type="entry name" value="PRK13368.1"/>
    <property type="match status" value="1"/>
</dbReference>
<dbReference type="PANTHER" id="PTHR42866">
    <property type="entry name" value="3-DEOXY-MANNO-OCTULOSONATE CYTIDYLYLTRANSFERASE"/>
    <property type="match status" value="1"/>
</dbReference>
<dbReference type="PANTHER" id="PTHR42866:SF2">
    <property type="entry name" value="3-DEOXY-MANNO-OCTULOSONATE CYTIDYLYLTRANSFERASE, MITOCHONDRIAL"/>
    <property type="match status" value="1"/>
</dbReference>
<dbReference type="Pfam" id="PF02348">
    <property type="entry name" value="CTP_transf_3"/>
    <property type="match status" value="1"/>
</dbReference>
<dbReference type="SUPFAM" id="SSF53448">
    <property type="entry name" value="Nucleotide-diphospho-sugar transferases"/>
    <property type="match status" value="1"/>
</dbReference>
<keyword id="KW-0963">Cytoplasm</keyword>
<keyword id="KW-0448">Lipopolysaccharide biosynthesis</keyword>
<keyword id="KW-0548">Nucleotidyltransferase</keyword>
<keyword id="KW-0808">Transferase</keyword>
<organism>
    <name type="scientific">Vibrio cholerae serotype O1 (strain M66-2)</name>
    <dbReference type="NCBI Taxonomy" id="579112"/>
    <lineage>
        <taxon>Bacteria</taxon>
        <taxon>Pseudomonadati</taxon>
        <taxon>Pseudomonadota</taxon>
        <taxon>Gammaproteobacteria</taxon>
        <taxon>Vibrionales</taxon>
        <taxon>Vibrionaceae</taxon>
        <taxon>Vibrio</taxon>
    </lineage>
</organism>
<name>KDSB_VIBCM</name>
<accession>C3LNH9</accession>
<comment type="function">
    <text evidence="1">Activates KDO (a required 8-carbon sugar) for incorporation into bacterial lipopolysaccharide in Gram-negative bacteria.</text>
</comment>
<comment type="catalytic activity">
    <reaction evidence="1">
        <text>3-deoxy-alpha-D-manno-oct-2-ulosonate + CTP = CMP-3-deoxy-beta-D-manno-octulosonate + diphosphate</text>
        <dbReference type="Rhea" id="RHEA:23448"/>
        <dbReference type="ChEBI" id="CHEBI:33019"/>
        <dbReference type="ChEBI" id="CHEBI:37563"/>
        <dbReference type="ChEBI" id="CHEBI:85986"/>
        <dbReference type="ChEBI" id="CHEBI:85987"/>
        <dbReference type="EC" id="2.7.7.38"/>
    </reaction>
</comment>
<comment type="pathway">
    <text evidence="1">Nucleotide-sugar biosynthesis; CMP-3-deoxy-D-manno-octulosonate biosynthesis; CMP-3-deoxy-D-manno-octulosonate from 3-deoxy-D-manno-octulosonate and CTP: step 1/1.</text>
</comment>
<comment type="pathway">
    <text evidence="1">Bacterial outer membrane biogenesis; lipopolysaccharide biosynthesis.</text>
</comment>
<comment type="subcellular location">
    <subcellularLocation>
        <location evidence="1">Cytoplasm</location>
    </subcellularLocation>
</comment>
<comment type="similarity">
    <text evidence="1">Belongs to the KdsB family.</text>
</comment>
<reference key="1">
    <citation type="journal article" date="2008" name="PLoS ONE">
        <title>A recalibrated molecular clock and independent origins for the cholera pandemic clones.</title>
        <authorList>
            <person name="Feng L."/>
            <person name="Reeves P.R."/>
            <person name="Lan R."/>
            <person name="Ren Y."/>
            <person name="Gao C."/>
            <person name="Zhou Z."/>
            <person name="Ren Y."/>
            <person name="Cheng J."/>
            <person name="Wang W."/>
            <person name="Wang J."/>
            <person name="Qian W."/>
            <person name="Li D."/>
            <person name="Wang L."/>
        </authorList>
    </citation>
    <scope>NUCLEOTIDE SEQUENCE [LARGE SCALE GENOMIC DNA]</scope>
    <source>
        <strain>M66-2</strain>
    </source>
</reference>
<protein>
    <recommendedName>
        <fullName evidence="1">3-deoxy-manno-octulosonate cytidylyltransferase</fullName>
        <ecNumber evidence="1">2.7.7.38</ecNumber>
    </recommendedName>
    <alternativeName>
        <fullName evidence="1">CMP-2-keto-3-deoxyoctulosonic acid synthase</fullName>
        <shortName evidence="1">CKS</shortName>
        <shortName evidence="1">CMP-KDO synthase</shortName>
    </alternativeName>
</protein>
<feature type="chain" id="PRO_1000117808" description="3-deoxy-manno-octulosonate cytidylyltransferase">
    <location>
        <begin position="1"/>
        <end position="252"/>
    </location>
</feature>
<proteinExistence type="inferred from homology"/>
<gene>
    <name evidence="1" type="primary">kdsB</name>
    <name type="ordered locus">VCM66_1799</name>
</gene>